<reference key="1">
    <citation type="journal article" date="2007" name="PLoS Genet.">
        <title>Patterns and implications of gene gain and loss in the evolution of Prochlorococcus.</title>
        <authorList>
            <person name="Kettler G.C."/>
            <person name="Martiny A.C."/>
            <person name="Huang K."/>
            <person name="Zucker J."/>
            <person name="Coleman M.L."/>
            <person name="Rodrigue S."/>
            <person name="Chen F."/>
            <person name="Lapidus A."/>
            <person name="Ferriera S."/>
            <person name="Johnson J."/>
            <person name="Steglich C."/>
            <person name="Church G.M."/>
            <person name="Richardson P."/>
            <person name="Chisholm S.W."/>
        </authorList>
    </citation>
    <scope>NUCLEOTIDE SEQUENCE [LARGE SCALE GENOMIC DNA]</scope>
    <source>
        <strain>MIT 9211</strain>
    </source>
</reference>
<evidence type="ECO:0000255" key="1">
    <source>
        <dbReference type="HAMAP-Rule" id="MF_02002"/>
    </source>
</evidence>
<keyword id="KW-0030">Aminoacyl-tRNA synthetase</keyword>
<keyword id="KW-0067">ATP-binding</keyword>
<keyword id="KW-0963">Cytoplasm</keyword>
<keyword id="KW-0436">Ligase</keyword>
<keyword id="KW-0479">Metal-binding</keyword>
<keyword id="KW-0547">Nucleotide-binding</keyword>
<keyword id="KW-0648">Protein biosynthesis</keyword>
<keyword id="KW-1185">Reference proteome</keyword>
<keyword id="KW-0862">Zinc</keyword>
<protein>
    <recommendedName>
        <fullName evidence="1">Isoleucine--tRNA ligase</fullName>
        <ecNumber evidence="1">6.1.1.5</ecNumber>
    </recommendedName>
    <alternativeName>
        <fullName evidence="1">Isoleucyl-tRNA synthetase</fullName>
        <shortName evidence="1">IleRS</shortName>
    </alternativeName>
</protein>
<sequence>MTKETRQGEQNRPSYKESLNLLKTSFGMRANATLREPELQNFWADKGIDLELGLANKGPSFTLHDGPPYANGALHMGHALNKVLKDIINKFHIMRGHKVHFVPGWDCHGLPIELKVLQTLSNKERQALTPIQLRKKAAAYASKQVKGQMEGFKRWGIWGNWNKPYLTLQKEYESAQVKLFGQMVLKGYIYRGLKPVHWSPSSRTALAEAELEYPEAHTSPSVYVAFSVIHLPQSLSENLIKQGLELPGDEVELSKRLKVCIWTTTPWTLPANAAVSVNSNLDYSFVRHEEKGQILIFATELLEEVSEILGISFKQVANAKGESLKGILYKHPLYERTAPIVLGGSYITTQSGTGLVHTAPGHGIDDFKTGLQNNLEVFCPVDEKGIFTSEAGKFEGLNVLKDANKEIISSLEISGSLLKELPYVHKYPYDWRTKKPTIFRATEQWFASVEGFREDALKAIDDVEWLPESGRNRIQSMVRERGDWCISRQRTWGIPIPVFYKKNTNEILLNKETIDHIENLFAQYGADIWWEFDESKLLPPSLASESHHWQKGVDTMDVWFDSGSSWASVSCQRDELGYPADLYLEGTDQHRGWFQSSLLTSVAVNGHAPYKKVLTHGFALDENGRKMSKSLGNIIDPTVIINGGTNKKTDPAYGADVLRLWVSSVDYSVDVPIGSNILKQLSDVYRKVRNTSRYLLGNLHDFDPKKNSVDIDNLPILDKWMLNRTAEVIDEITLAFEKYEFSRFFQLLQSFCTVDLSNFYLDIAKDRLYVSAPDDPRRRACQTVMALIIEKLAGLISPVLCHMAEDIWQNIPYQLSEESVFKRGWPVSPSNWKRASLTEPISLIRELRTSVNRVLEGCRNRQELGSSLEAGLRLEITNQGLLDAIDFLAKNGDHDVDCIRDWFLVSQLQIGGEPWAEVLISQQFELGVIEISNARGYKCERCWHYEQDIGSCSEHPTLCGRCVTVMNRL</sequence>
<feature type="chain" id="PRO_1000189186" description="Isoleucine--tRNA ligase">
    <location>
        <begin position="1"/>
        <end position="969"/>
    </location>
</feature>
<feature type="short sequence motif" description="'HIGH' region">
    <location>
        <begin position="68"/>
        <end position="78"/>
    </location>
</feature>
<feature type="short sequence motif" description="'KMSKS' region">
    <location>
        <begin position="626"/>
        <end position="630"/>
    </location>
</feature>
<feature type="binding site" evidence="1">
    <location>
        <position position="585"/>
    </location>
    <ligand>
        <name>L-isoleucyl-5'-AMP</name>
        <dbReference type="ChEBI" id="CHEBI:178002"/>
    </ligand>
</feature>
<feature type="binding site" evidence="1">
    <location>
        <position position="629"/>
    </location>
    <ligand>
        <name>ATP</name>
        <dbReference type="ChEBI" id="CHEBI:30616"/>
    </ligand>
</feature>
<feature type="binding site" evidence="1">
    <location>
        <position position="939"/>
    </location>
    <ligand>
        <name>Zn(2+)</name>
        <dbReference type="ChEBI" id="CHEBI:29105"/>
    </ligand>
</feature>
<feature type="binding site" evidence="1">
    <location>
        <position position="942"/>
    </location>
    <ligand>
        <name>Zn(2+)</name>
        <dbReference type="ChEBI" id="CHEBI:29105"/>
    </ligand>
</feature>
<feature type="binding site" evidence="1">
    <location>
        <position position="959"/>
    </location>
    <ligand>
        <name>Zn(2+)</name>
        <dbReference type="ChEBI" id="CHEBI:29105"/>
    </ligand>
</feature>
<feature type="binding site" evidence="1">
    <location>
        <position position="962"/>
    </location>
    <ligand>
        <name>Zn(2+)</name>
        <dbReference type="ChEBI" id="CHEBI:29105"/>
    </ligand>
</feature>
<gene>
    <name evidence="1" type="primary">ileS</name>
    <name type="ordered locus">P9211_02611</name>
</gene>
<name>SYI_PROM4</name>
<organism>
    <name type="scientific">Prochlorococcus marinus (strain MIT 9211)</name>
    <dbReference type="NCBI Taxonomy" id="93059"/>
    <lineage>
        <taxon>Bacteria</taxon>
        <taxon>Bacillati</taxon>
        <taxon>Cyanobacteriota</taxon>
        <taxon>Cyanophyceae</taxon>
        <taxon>Synechococcales</taxon>
        <taxon>Prochlorococcaceae</taxon>
        <taxon>Prochlorococcus</taxon>
    </lineage>
</organism>
<dbReference type="EC" id="6.1.1.5" evidence="1"/>
<dbReference type="EMBL" id="CP000878">
    <property type="protein sequence ID" value="ABX08192.1"/>
    <property type="molecule type" value="Genomic_DNA"/>
</dbReference>
<dbReference type="RefSeq" id="WP_012194817.1">
    <property type="nucleotide sequence ID" value="NC_009976.1"/>
</dbReference>
<dbReference type="SMR" id="A9BDK6"/>
<dbReference type="STRING" id="93059.P9211_02611"/>
<dbReference type="KEGG" id="pmj:P9211_02611"/>
<dbReference type="eggNOG" id="COG0060">
    <property type="taxonomic scope" value="Bacteria"/>
</dbReference>
<dbReference type="HOGENOM" id="CLU_001493_7_0_3"/>
<dbReference type="OrthoDB" id="9810365at2"/>
<dbReference type="Proteomes" id="UP000000788">
    <property type="component" value="Chromosome"/>
</dbReference>
<dbReference type="GO" id="GO:0005737">
    <property type="term" value="C:cytoplasm"/>
    <property type="evidence" value="ECO:0007669"/>
    <property type="project" value="UniProtKB-SubCell"/>
</dbReference>
<dbReference type="GO" id="GO:0002161">
    <property type="term" value="F:aminoacyl-tRNA deacylase activity"/>
    <property type="evidence" value="ECO:0007669"/>
    <property type="project" value="InterPro"/>
</dbReference>
<dbReference type="GO" id="GO:0005524">
    <property type="term" value="F:ATP binding"/>
    <property type="evidence" value="ECO:0007669"/>
    <property type="project" value="UniProtKB-UniRule"/>
</dbReference>
<dbReference type="GO" id="GO:0004822">
    <property type="term" value="F:isoleucine-tRNA ligase activity"/>
    <property type="evidence" value="ECO:0007669"/>
    <property type="project" value="UniProtKB-UniRule"/>
</dbReference>
<dbReference type="GO" id="GO:0000049">
    <property type="term" value="F:tRNA binding"/>
    <property type="evidence" value="ECO:0007669"/>
    <property type="project" value="InterPro"/>
</dbReference>
<dbReference type="GO" id="GO:0008270">
    <property type="term" value="F:zinc ion binding"/>
    <property type="evidence" value="ECO:0007669"/>
    <property type="project" value="UniProtKB-UniRule"/>
</dbReference>
<dbReference type="GO" id="GO:0006428">
    <property type="term" value="P:isoleucyl-tRNA aminoacylation"/>
    <property type="evidence" value="ECO:0007669"/>
    <property type="project" value="UniProtKB-UniRule"/>
</dbReference>
<dbReference type="CDD" id="cd07960">
    <property type="entry name" value="Anticodon_Ia_Ile_BEm"/>
    <property type="match status" value="1"/>
</dbReference>
<dbReference type="CDD" id="cd00818">
    <property type="entry name" value="IleRS_core"/>
    <property type="match status" value="1"/>
</dbReference>
<dbReference type="FunFam" id="1.10.730.20:FF:000001">
    <property type="entry name" value="Isoleucine--tRNA ligase"/>
    <property type="match status" value="1"/>
</dbReference>
<dbReference type="FunFam" id="3.40.50.620:FF:000111">
    <property type="entry name" value="Mitochondrial isoleucyl-tRNA synthetase"/>
    <property type="match status" value="1"/>
</dbReference>
<dbReference type="Gene3D" id="1.10.730.20">
    <property type="match status" value="1"/>
</dbReference>
<dbReference type="Gene3D" id="3.40.50.620">
    <property type="entry name" value="HUPs"/>
    <property type="match status" value="2"/>
</dbReference>
<dbReference type="Gene3D" id="3.90.740.10">
    <property type="entry name" value="Valyl/Leucyl/Isoleucyl-tRNA synthetase, editing domain"/>
    <property type="match status" value="1"/>
</dbReference>
<dbReference type="HAMAP" id="MF_02002">
    <property type="entry name" value="Ile_tRNA_synth_type1"/>
    <property type="match status" value="1"/>
</dbReference>
<dbReference type="InterPro" id="IPR001412">
    <property type="entry name" value="aa-tRNA-synth_I_CS"/>
</dbReference>
<dbReference type="InterPro" id="IPR002300">
    <property type="entry name" value="aa-tRNA-synth_Ia"/>
</dbReference>
<dbReference type="InterPro" id="IPR033708">
    <property type="entry name" value="Anticodon_Ile_BEm"/>
</dbReference>
<dbReference type="InterPro" id="IPR002301">
    <property type="entry name" value="Ile-tRNA-ligase"/>
</dbReference>
<dbReference type="InterPro" id="IPR023585">
    <property type="entry name" value="Ile-tRNA-ligase_type1"/>
</dbReference>
<dbReference type="InterPro" id="IPR050081">
    <property type="entry name" value="Ile-tRNA_ligase"/>
</dbReference>
<dbReference type="InterPro" id="IPR013155">
    <property type="entry name" value="M/V/L/I-tRNA-synth_anticd-bd"/>
</dbReference>
<dbReference type="InterPro" id="IPR014729">
    <property type="entry name" value="Rossmann-like_a/b/a_fold"/>
</dbReference>
<dbReference type="InterPro" id="IPR009080">
    <property type="entry name" value="tRNAsynth_Ia_anticodon-bd"/>
</dbReference>
<dbReference type="InterPro" id="IPR009008">
    <property type="entry name" value="Val/Leu/Ile-tRNA-synth_edit"/>
</dbReference>
<dbReference type="InterPro" id="IPR010663">
    <property type="entry name" value="Znf_FPG/IleRS"/>
</dbReference>
<dbReference type="NCBIfam" id="TIGR00392">
    <property type="entry name" value="ileS"/>
    <property type="match status" value="1"/>
</dbReference>
<dbReference type="PANTHER" id="PTHR42765:SF1">
    <property type="entry name" value="ISOLEUCINE--TRNA LIGASE, MITOCHONDRIAL"/>
    <property type="match status" value="1"/>
</dbReference>
<dbReference type="PANTHER" id="PTHR42765">
    <property type="entry name" value="SOLEUCYL-TRNA SYNTHETASE"/>
    <property type="match status" value="1"/>
</dbReference>
<dbReference type="Pfam" id="PF08264">
    <property type="entry name" value="Anticodon_1"/>
    <property type="match status" value="1"/>
</dbReference>
<dbReference type="Pfam" id="PF00133">
    <property type="entry name" value="tRNA-synt_1"/>
    <property type="match status" value="1"/>
</dbReference>
<dbReference type="Pfam" id="PF06827">
    <property type="entry name" value="zf-FPG_IleRS"/>
    <property type="match status" value="1"/>
</dbReference>
<dbReference type="PRINTS" id="PR00984">
    <property type="entry name" value="TRNASYNTHILE"/>
</dbReference>
<dbReference type="SUPFAM" id="SSF47323">
    <property type="entry name" value="Anticodon-binding domain of a subclass of class I aminoacyl-tRNA synthetases"/>
    <property type="match status" value="1"/>
</dbReference>
<dbReference type="SUPFAM" id="SSF52374">
    <property type="entry name" value="Nucleotidylyl transferase"/>
    <property type="match status" value="1"/>
</dbReference>
<dbReference type="SUPFAM" id="SSF50677">
    <property type="entry name" value="ValRS/IleRS/LeuRS editing domain"/>
    <property type="match status" value="1"/>
</dbReference>
<dbReference type="PROSITE" id="PS00178">
    <property type="entry name" value="AA_TRNA_LIGASE_I"/>
    <property type="match status" value="1"/>
</dbReference>
<proteinExistence type="inferred from homology"/>
<accession>A9BDK6</accession>
<comment type="function">
    <text evidence="1">Catalyzes the attachment of isoleucine to tRNA(Ile). As IleRS can inadvertently accommodate and process structurally similar amino acids such as valine, to avoid such errors it has two additional distinct tRNA(Ile)-dependent editing activities. One activity is designated as 'pretransfer' editing and involves the hydrolysis of activated Val-AMP. The other activity is designated 'posttransfer' editing and involves deacylation of mischarged Val-tRNA(Ile).</text>
</comment>
<comment type="catalytic activity">
    <reaction evidence="1">
        <text>tRNA(Ile) + L-isoleucine + ATP = L-isoleucyl-tRNA(Ile) + AMP + diphosphate</text>
        <dbReference type="Rhea" id="RHEA:11060"/>
        <dbReference type="Rhea" id="RHEA-COMP:9666"/>
        <dbReference type="Rhea" id="RHEA-COMP:9695"/>
        <dbReference type="ChEBI" id="CHEBI:30616"/>
        <dbReference type="ChEBI" id="CHEBI:33019"/>
        <dbReference type="ChEBI" id="CHEBI:58045"/>
        <dbReference type="ChEBI" id="CHEBI:78442"/>
        <dbReference type="ChEBI" id="CHEBI:78528"/>
        <dbReference type="ChEBI" id="CHEBI:456215"/>
        <dbReference type="EC" id="6.1.1.5"/>
    </reaction>
</comment>
<comment type="cofactor">
    <cofactor evidence="1">
        <name>Zn(2+)</name>
        <dbReference type="ChEBI" id="CHEBI:29105"/>
    </cofactor>
    <text evidence="1">Binds 1 zinc ion per subunit.</text>
</comment>
<comment type="subunit">
    <text evidence="1">Monomer.</text>
</comment>
<comment type="subcellular location">
    <subcellularLocation>
        <location evidence="1">Cytoplasm</location>
    </subcellularLocation>
</comment>
<comment type="domain">
    <text evidence="1">IleRS has two distinct active sites: one for aminoacylation and one for editing. The misactivated valine is translocated from the active site to the editing site, which sterically excludes the correctly activated isoleucine. The single editing site contains two valyl binding pockets, one specific for each substrate (Val-AMP or Val-tRNA(Ile)).</text>
</comment>
<comment type="similarity">
    <text evidence="1">Belongs to the class-I aminoacyl-tRNA synthetase family. IleS type 1 subfamily.</text>
</comment>